<organism>
    <name type="scientific">Colwellia psychrerythraea (strain 34H / ATCC BAA-681)</name>
    <name type="common">Vibrio psychroerythus</name>
    <dbReference type="NCBI Taxonomy" id="167879"/>
    <lineage>
        <taxon>Bacteria</taxon>
        <taxon>Pseudomonadati</taxon>
        <taxon>Pseudomonadota</taxon>
        <taxon>Gammaproteobacteria</taxon>
        <taxon>Alteromonadales</taxon>
        <taxon>Colwelliaceae</taxon>
        <taxon>Colwellia</taxon>
    </lineage>
</organism>
<gene>
    <name evidence="1" type="primary">truA</name>
    <name type="ordered locus">CPS_3803</name>
</gene>
<feature type="chain" id="PRO_1000017071" description="tRNA pseudouridine synthase A">
    <location>
        <begin position="1"/>
        <end position="259"/>
    </location>
</feature>
<feature type="active site" description="Nucleophile" evidence="1">
    <location>
        <position position="51"/>
    </location>
</feature>
<feature type="binding site" evidence="1">
    <location>
        <position position="109"/>
    </location>
    <ligand>
        <name>substrate</name>
    </ligand>
</feature>
<proteinExistence type="inferred from homology"/>
<evidence type="ECO:0000255" key="1">
    <source>
        <dbReference type="HAMAP-Rule" id="MF_00171"/>
    </source>
</evidence>
<dbReference type="EC" id="5.4.99.12" evidence="1"/>
<dbReference type="EMBL" id="CP000083">
    <property type="protein sequence ID" value="AAZ26378.1"/>
    <property type="molecule type" value="Genomic_DNA"/>
</dbReference>
<dbReference type="RefSeq" id="WP_011044552.1">
    <property type="nucleotide sequence ID" value="NC_003910.7"/>
</dbReference>
<dbReference type="SMR" id="Q47XK4"/>
<dbReference type="STRING" id="167879.CPS_3803"/>
<dbReference type="KEGG" id="cps:CPS_3803"/>
<dbReference type="eggNOG" id="COG0101">
    <property type="taxonomic scope" value="Bacteria"/>
</dbReference>
<dbReference type="HOGENOM" id="CLU_014673_0_2_6"/>
<dbReference type="Proteomes" id="UP000000547">
    <property type="component" value="Chromosome"/>
</dbReference>
<dbReference type="GO" id="GO:0003723">
    <property type="term" value="F:RNA binding"/>
    <property type="evidence" value="ECO:0007669"/>
    <property type="project" value="InterPro"/>
</dbReference>
<dbReference type="GO" id="GO:0160147">
    <property type="term" value="F:tRNA pseudouridine(38-40) synthase activity"/>
    <property type="evidence" value="ECO:0007669"/>
    <property type="project" value="UniProtKB-EC"/>
</dbReference>
<dbReference type="GO" id="GO:0031119">
    <property type="term" value="P:tRNA pseudouridine synthesis"/>
    <property type="evidence" value="ECO:0007669"/>
    <property type="project" value="UniProtKB-UniRule"/>
</dbReference>
<dbReference type="CDD" id="cd02570">
    <property type="entry name" value="PseudoU_synth_EcTruA"/>
    <property type="match status" value="1"/>
</dbReference>
<dbReference type="FunFam" id="3.30.70.580:FF:000001">
    <property type="entry name" value="tRNA pseudouridine synthase A"/>
    <property type="match status" value="1"/>
</dbReference>
<dbReference type="Gene3D" id="3.30.70.660">
    <property type="entry name" value="Pseudouridine synthase I, catalytic domain, C-terminal subdomain"/>
    <property type="match status" value="1"/>
</dbReference>
<dbReference type="Gene3D" id="3.30.70.580">
    <property type="entry name" value="Pseudouridine synthase I, catalytic domain, N-terminal subdomain"/>
    <property type="match status" value="1"/>
</dbReference>
<dbReference type="HAMAP" id="MF_00171">
    <property type="entry name" value="TruA"/>
    <property type="match status" value="1"/>
</dbReference>
<dbReference type="InterPro" id="IPR020103">
    <property type="entry name" value="PsdUridine_synth_cat_dom_sf"/>
</dbReference>
<dbReference type="InterPro" id="IPR001406">
    <property type="entry name" value="PsdUridine_synth_TruA"/>
</dbReference>
<dbReference type="InterPro" id="IPR020097">
    <property type="entry name" value="PsdUridine_synth_TruA_a/b_dom"/>
</dbReference>
<dbReference type="InterPro" id="IPR020095">
    <property type="entry name" value="PsdUridine_synth_TruA_C"/>
</dbReference>
<dbReference type="InterPro" id="IPR020094">
    <property type="entry name" value="TruA/RsuA/RluB/E/F_N"/>
</dbReference>
<dbReference type="NCBIfam" id="TIGR00071">
    <property type="entry name" value="hisT_truA"/>
    <property type="match status" value="1"/>
</dbReference>
<dbReference type="PANTHER" id="PTHR11142">
    <property type="entry name" value="PSEUDOURIDYLATE SYNTHASE"/>
    <property type="match status" value="1"/>
</dbReference>
<dbReference type="PANTHER" id="PTHR11142:SF0">
    <property type="entry name" value="TRNA PSEUDOURIDINE SYNTHASE-LIKE 1"/>
    <property type="match status" value="1"/>
</dbReference>
<dbReference type="Pfam" id="PF01416">
    <property type="entry name" value="PseudoU_synth_1"/>
    <property type="match status" value="2"/>
</dbReference>
<dbReference type="PIRSF" id="PIRSF001430">
    <property type="entry name" value="tRNA_psdUrid_synth"/>
    <property type="match status" value="1"/>
</dbReference>
<dbReference type="SUPFAM" id="SSF55120">
    <property type="entry name" value="Pseudouridine synthase"/>
    <property type="match status" value="1"/>
</dbReference>
<protein>
    <recommendedName>
        <fullName evidence="1">tRNA pseudouridine synthase A</fullName>
        <ecNumber evidence="1">5.4.99.12</ecNumber>
    </recommendedName>
    <alternativeName>
        <fullName evidence="1">tRNA pseudouridine(38-40) synthase</fullName>
    </alternativeName>
    <alternativeName>
        <fullName evidence="1">tRNA pseudouridylate synthase I</fullName>
    </alternativeName>
    <alternativeName>
        <fullName evidence="1">tRNA-uridine isomerase I</fullName>
    </alternativeName>
</protein>
<accession>Q47XK4</accession>
<keyword id="KW-0413">Isomerase</keyword>
<keyword id="KW-0819">tRNA processing</keyword>
<sequence length="259" mass="29473">MRYALGIEYDGKNYCGWQRQNNVITVQEKLEKALSKIADEKIEVVCAGRTDTGVNATNQVIHFDTEKKRKDTAWTLGVNTHLPSDVAVAWVKKVDDDFHARFSATARNYRYIIYNKPLRSAILSHGISHCHFALDENLMQQGADYLLGKHDFTSFRTVHCQSHSAVRTIKHCRVTRQGDYLVVDIKANAFLHHMVRNVVGSLMRVGQSQETPHWMKEVLLAKNRCVAGVTAPPEGLYFVDVDYPENFELPKSRLGPLFL</sequence>
<name>TRUA_COLP3</name>
<reference key="1">
    <citation type="journal article" date="2005" name="Proc. Natl. Acad. Sci. U.S.A.">
        <title>The psychrophilic lifestyle as revealed by the genome sequence of Colwellia psychrerythraea 34H through genomic and proteomic analyses.</title>
        <authorList>
            <person name="Methe B.A."/>
            <person name="Nelson K.E."/>
            <person name="Deming J.W."/>
            <person name="Momen B."/>
            <person name="Melamud E."/>
            <person name="Zhang X."/>
            <person name="Moult J."/>
            <person name="Madupu R."/>
            <person name="Nelson W.C."/>
            <person name="Dodson R.J."/>
            <person name="Brinkac L.M."/>
            <person name="Daugherty S.C."/>
            <person name="Durkin A.S."/>
            <person name="DeBoy R.T."/>
            <person name="Kolonay J.F."/>
            <person name="Sullivan S.A."/>
            <person name="Zhou L."/>
            <person name="Davidsen T.M."/>
            <person name="Wu M."/>
            <person name="Huston A.L."/>
            <person name="Lewis M."/>
            <person name="Weaver B."/>
            <person name="Weidman J.F."/>
            <person name="Khouri H."/>
            <person name="Utterback T.R."/>
            <person name="Feldblyum T.V."/>
            <person name="Fraser C.M."/>
        </authorList>
    </citation>
    <scope>NUCLEOTIDE SEQUENCE [LARGE SCALE GENOMIC DNA]</scope>
    <source>
        <strain>34H / ATCC BAA-681</strain>
    </source>
</reference>
<comment type="function">
    <text evidence="1">Formation of pseudouridine at positions 38, 39 and 40 in the anticodon stem and loop of transfer RNAs.</text>
</comment>
<comment type="catalytic activity">
    <reaction evidence="1">
        <text>uridine(38/39/40) in tRNA = pseudouridine(38/39/40) in tRNA</text>
        <dbReference type="Rhea" id="RHEA:22376"/>
        <dbReference type="Rhea" id="RHEA-COMP:10085"/>
        <dbReference type="Rhea" id="RHEA-COMP:10087"/>
        <dbReference type="ChEBI" id="CHEBI:65314"/>
        <dbReference type="ChEBI" id="CHEBI:65315"/>
        <dbReference type="EC" id="5.4.99.12"/>
    </reaction>
</comment>
<comment type="subunit">
    <text evidence="1">Homodimer.</text>
</comment>
<comment type="similarity">
    <text evidence="1">Belongs to the tRNA pseudouridine synthase TruA family.</text>
</comment>